<keyword id="KW-1185">Reference proteome</keyword>
<keyword id="KW-0694">RNA-binding</keyword>
<gene>
    <name type="primary">RBM18</name>
</gene>
<proteinExistence type="evidence at transcript level"/>
<dbReference type="EMBL" id="CR860369">
    <property type="protein sequence ID" value="CAH92497.1"/>
    <property type="molecule type" value="mRNA"/>
</dbReference>
<dbReference type="RefSeq" id="NP_001126470.1">
    <property type="nucleotide sequence ID" value="NM_001132998.2"/>
</dbReference>
<dbReference type="RefSeq" id="XP_054375443.1">
    <property type="nucleotide sequence ID" value="XM_054519468.2"/>
</dbReference>
<dbReference type="SMR" id="Q5R6W3"/>
<dbReference type="FunCoup" id="Q5R6W3">
    <property type="interactions" value="3271"/>
</dbReference>
<dbReference type="STRING" id="9601.ENSPPYP00000021932"/>
<dbReference type="Ensembl" id="ENSPPYT00000053578.1">
    <property type="protein sequence ID" value="ENSPPYP00000043886.1"/>
    <property type="gene ID" value="ENSPPYG00000033968.1"/>
</dbReference>
<dbReference type="GeneID" id="100173457"/>
<dbReference type="KEGG" id="pon:100173457"/>
<dbReference type="CTD" id="92400"/>
<dbReference type="eggNOG" id="ENOG502RH7I">
    <property type="taxonomic scope" value="Eukaryota"/>
</dbReference>
<dbReference type="GeneTree" id="ENSGT00390000013765"/>
<dbReference type="HOGENOM" id="CLU_066926_2_0_1"/>
<dbReference type="InParanoid" id="Q5R6W3"/>
<dbReference type="OMA" id="FACGRPL"/>
<dbReference type="OrthoDB" id="6730379at2759"/>
<dbReference type="TreeFam" id="TF323314"/>
<dbReference type="Proteomes" id="UP000001595">
    <property type="component" value="Chromosome 9"/>
</dbReference>
<dbReference type="GO" id="GO:0005829">
    <property type="term" value="C:cytosol"/>
    <property type="evidence" value="ECO:0007669"/>
    <property type="project" value="Ensembl"/>
</dbReference>
<dbReference type="GO" id="GO:0045171">
    <property type="term" value="C:intercellular bridge"/>
    <property type="evidence" value="ECO:0007669"/>
    <property type="project" value="Ensembl"/>
</dbReference>
<dbReference type="GO" id="GO:0005654">
    <property type="term" value="C:nucleoplasm"/>
    <property type="evidence" value="ECO:0007669"/>
    <property type="project" value="Ensembl"/>
</dbReference>
<dbReference type="GO" id="GO:0003723">
    <property type="term" value="F:RNA binding"/>
    <property type="evidence" value="ECO:0007669"/>
    <property type="project" value="UniProtKB-KW"/>
</dbReference>
<dbReference type="CDD" id="cd12355">
    <property type="entry name" value="RRM_RBM18"/>
    <property type="match status" value="1"/>
</dbReference>
<dbReference type="FunFam" id="3.30.70.330:FF:000185">
    <property type="entry name" value="Probable RNA-binding protein 18"/>
    <property type="match status" value="1"/>
</dbReference>
<dbReference type="Gene3D" id="3.30.70.330">
    <property type="match status" value="1"/>
</dbReference>
<dbReference type="InterPro" id="IPR012677">
    <property type="entry name" value="Nucleotide-bd_a/b_plait_sf"/>
</dbReference>
<dbReference type="InterPro" id="IPR035979">
    <property type="entry name" value="RBD_domain_sf"/>
</dbReference>
<dbReference type="InterPro" id="IPR039157">
    <property type="entry name" value="RBM18_RRM"/>
</dbReference>
<dbReference type="InterPro" id="IPR000504">
    <property type="entry name" value="RRM_dom"/>
</dbReference>
<dbReference type="PANTHER" id="PTHR21245">
    <property type="entry name" value="HETEROGENEOUS NUCLEAR RIBONUCLEOPROTEIN"/>
    <property type="match status" value="1"/>
</dbReference>
<dbReference type="Pfam" id="PF00076">
    <property type="entry name" value="RRM_1"/>
    <property type="match status" value="1"/>
</dbReference>
<dbReference type="SMART" id="SM00360">
    <property type="entry name" value="RRM"/>
    <property type="match status" value="1"/>
</dbReference>
<dbReference type="SUPFAM" id="SSF54928">
    <property type="entry name" value="RNA-binding domain, RBD"/>
    <property type="match status" value="1"/>
</dbReference>
<dbReference type="PROSITE" id="PS50102">
    <property type="entry name" value="RRM"/>
    <property type="match status" value="1"/>
</dbReference>
<feature type="chain" id="PRO_0000254124" description="Probable RNA-binding protein 18">
    <location>
        <begin position="1"/>
        <end position="190"/>
    </location>
</feature>
<feature type="domain" description="RRM" evidence="1">
    <location>
        <begin position="25"/>
        <end position="106"/>
    </location>
</feature>
<feature type="region of interest" description="Disordered" evidence="2">
    <location>
        <begin position="166"/>
        <end position="190"/>
    </location>
</feature>
<reference key="1">
    <citation type="submission" date="2004-11" db="EMBL/GenBank/DDBJ databases">
        <authorList>
            <consortium name="The German cDNA consortium"/>
        </authorList>
    </citation>
    <scope>NUCLEOTIDE SEQUENCE [LARGE SCALE MRNA]</scope>
    <source>
        <tissue>Brain cortex</tissue>
    </source>
</reference>
<name>RBM18_PONAB</name>
<evidence type="ECO:0000255" key="1">
    <source>
        <dbReference type="PROSITE-ProRule" id="PRU00176"/>
    </source>
</evidence>
<evidence type="ECO:0000256" key="2">
    <source>
        <dbReference type="SAM" id="MobiDB-lite"/>
    </source>
</evidence>
<sequence>MEAETKTLPLENASILSEGSLQEGHRLWIGNLDPKITEYHLLKLLQKFGKVKQFDFLFHKSGALEGQPRGYCFVNFETKQEAEQAIQCLNGKLALSKKLVVRWAHAQVKRYDHNKNDKILPISLEPSSSTEPTQSNLSVTAKIKAIEAKLKMMAENPDAEYPAAPVYSYFKPPDKKRTTPYSRTAWKSRR</sequence>
<accession>Q5R6W3</accession>
<protein>
    <recommendedName>
        <fullName>Probable RNA-binding protein 18</fullName>
    </recommendedName>
    <alternativeName>
        <fullName>RNA-binding motif protein 18</fullName>
    </alternativeName>
</protein>
<organism>
    <name type="scientific">Pongo abelii</name>
    <name type="common">Sumatran orangutan</name>
    <name type="synonym">Pongo pygmaeus abelii</name>
    <dbReference type="NCBI Taxonomy" id="9601"/>
    <lineage>
        <taxon>Eukaryota</taxon>
        <taxon>Metazoa</taxon>
        <taxon>Chordata</taxon>
        <taxon>Craniata</taxon>
        <taxon>Vertebrata</taxon>
        <taxon>Euteleostomi</taxon>
        <taxon>Mammalia</taxon>
        <taxon>Eutheria</taxon>
        <taxon>Euarchontoglires</taxon>
        <taxon>Primates</taxon>
        <taxon>Haplorrhini</taxon>
        <taxon>Catarrhini</taxon>
        <taxon>Hominidae</taxon>
        <taxon>Pongo</taxon>
    </lineage>
</organism>